<reference key="1">
    <citation type="journal article" date="2006" name="Proc. Natl. Acad. Sci. U.S.A.">
        <title>Burkholderia xenovorans LB400 harbors a multi-replicon, 9.73-Mbp genome shaped for versatility.</title>
        <authorList>
            <person name="Chain P.S.G."/>
            <person name="Denef V.J."/>
            <person name="Konstantinidis K.T."/>
            <person name="Vergez L.M."/>
            <person name="Agullo L."/>
            <person name="Reyes V.L."/>
            <person name="Hauser L."/>
            <person name="Cordova M."/>
            <person name="Gomez L."/>
            <person name="Gonzalez M."/>
            <person name="Land M."/>
            <person name="Lao V."/>
            <person name="Larimer F."/>
            <person name="LiPuma J.J."/>
            <person name="Mahenthiralingam E."/>
            <person name="Malfatti S.A."/>
            <person name="Marx C.J."/>
            <person name="Parnell J.J."/>
            <person name="Ramette A."/>
            <person name="Richardson P."/>
            <person name="Seeger M."/>
            <person name="Smith D."/>
            <person name="Spilker T."/>
            <person name="Sul W.J."/>
            <person name="Tsoi T.V."/>
            <person name="Ulrich L.E."/>
            <person name="Zhulin I.B."/>
            <person name="Tiedje J.M."/>
        </authorList>
    </citation>
    <scope>NUCLEOTIDE SEQUENCE [LARGE SCALE GENOMIC DNA]</scope>
    <source>
        <strain>LB400</strain>
    </source>
</reference>
<comment type="function">
    <text evidence="1">Transport of potassium into the cell. Likely operates as a K(+):H(+) symporter.</text>
</comment>
<comment type="catalytic activity">
    <reaction evidence="1">
        <text>K(+)(in) + H(+)(in) = K(+)(out) + H(+)(out)</text>
        <dbReference type="Rhea" id="RHEA:28490"/>
        <dbReference type="ChEBI" id="CHEBI:15378"/>
        <dbReference type="ChEBI" id="CHEBI:29103"/>
    </reaction>
    <physiologicalReaction direction="right-to-left" evidence="1">
        <dbReference type="Rhea" id="RHEA:28492"/>
    </physiologicalReaction>
</comment>
<comment type="subcellular location">
    <subcellularLocation>
        <location evidence="1">Cell inner membrane</location>
        <topology evidence="1">Multi-pass membrane protein</topology>
    </subcellularLocation>
</comment>
<comment type="similarity">
    <text evidence="1">Belongs to the HAK/KUP transporter (TC 2.A.72) family.</text>
</comment>
<accession>Q13X42</accession>
<evidence type="ECO:0000255" key="1">
    <source>
        <dbReference type="HAMAP-Rule" id="MF_01522"/>
    </source>
</evidence>
<feature type="chain" id="PRO_0000279775" description="Probable potassium transport system protein Kup">
    <location>
        <begin position="1"/>
        <end position="628"/>
    </location>
</feature>
<feature type="transmembrane region" description="Helical" evidence="1">
    <location>
        <begin position="15"/>
        <end position="35"/>
    </location>
</feature>
<feature type="transmembrane region" description="Helical" evidence="1">
    <location>
        <begin position="55"/>
        <end position="75"/>
    </location>
</feature>
<feature type="transmembrane region" description="Helical" evidence="1">
    <location>
        <begin position="104"/>
        <end position="124"/>
    </location>
</feature>
<feature type="transmembrane region" description="Helical" evidence="1">
    <location>
        <begin position="142"/>
        <end position="162"/>
    </location>
</feature>
<feature type="transmembrane region" description="Helical" evidence="1">
    <location>
        <begin position="173"/>
        <end position="193"/>
    </location>
</feature>
<feature type="transmembrane region" description="Helical" evidence="1">
    <location>
        <begin position="210"/>
        <end position="230"/>
    </location>
</feature>
<feature type="transmembrane region" description="Helical" evidence="1">
    <location>
        <begin position="252"/>
        <end position="272"/>
    </location>
</feature>
<feature type="transmembrane region" description="Helical" evidence="1">
    <location>
        <begin position="281"/>
        <end position="301"/>
    </location>
</feature>
<feature type="transmembrane region" description="Helical" evidence="1">
    <location>
        <begin position="342"/>
        <end position="362"/>
    </location>
</feature>
<feature type="transmembrane region" description="Helical" evidence="1">
    <location>
        <begin position="372"/>
        <end position="392"/>
    </location>
</feature>
<feature type="transmembrane region" description="Helical" evidence="1">
    <location>
        <begin position="400"/>
        <end position="420"/>
    </location>
</feature>
<feature type="transmembrane region" description="Helical" evidence="1">
    <location>
        <begin position="426"/>
        <end position="446"/>
    </location>
</feature>
<sequence length="628" mass="68677">MTDNNHEHKQPLPSLAIAAIGVVFGDIGTSPLYSLKEAFSPSHGIPLTDQSILGVISLLFWAIVIVVGVKYVLFVMRADNNGEGGVLALMALALRSLDEKSKMAGLLMMLGIFGACMFYGDAVITPAISVISAVEGLEIAAPHLSHLVLPLTIVILILLFWIQRHGTAMVGRLFGPIMVLWFVVLAALGLWHILQSPSVIRALNPCYAYTFMAAHVLQAYVVLGSVVLVLTGAEALYADMGHFGAKPIRMAWYVLVMPSLVLNYFGQGALLMHDPKAIENPFFLLAPDWALLPLVVLSTIATVIASQAVISGAYSLTSQAIQLGYVPRMKILHTSELAIGQIYVPVVNWMLLFIILCIVIAFKSSDNLAAAYGIAVTATMVITTILACVVMVKVWNWNKLLVALIIGVFMTVDLGFFGANLLKVEEGGWLPLGIGALLFFLLMTWYKGRMIVKERTAADGIPLMPFLQGLLAHPPHRVSGTAIYLTGSDSLVPVSLLHNLKHNKVLHERTIFLTFVTRDIPYVNDADRVTVKDIDGGLYLVKAAYGFNETPDVKAVLLEVGRTHDMTFELMDTSFFLARETVVPTQLPGMSVWRERVFAWMHQNAAKPTDFFSIPANRVVELGTKIEI</sequence>
<protein>
    <recommendedName>
        <fullName evidence="1">Probable potassium transport system protein Kup</fullName>
    </recommendedName>
</protein>
<proteinExistence type="inferred from homology"/>
<organism>
    <name type="scientific">Paraburkholderia xenovorans (strain LB400)</name>
    <dbReference type="NCBI Taxonomy" id="266265"/>
    <lineage>
        <taxon>Bacteria</taxon>
        <taxon>Pseudomonadati</taxon>
        <taxon>Pseudomonadota</taxon>
        <taxon>Betaproteobacteria</taxon>
        <taxon>Burkholderiales</taxon>
        <taxon>Burkholderiaceae</taxon>
        <taxon>Paraburkholderia</taxon>
    </lineage>
</organism>
<gene>
    <name evidence="1" type="primary">kup</name>
    <name type="ordered locus">Bxeno_A2809</name>
    <name type="ORF">Bxe_A1608</name>
</gene>
<keyword id="KW-0997">Cell inner membrane</keyword>
<keyword id="KW-1003">Cell membrane</keyword>
<keyword id="KW-0406">Ion transport</keyword>
<keyword id="KW-0472">Membrane</keyword>
<keyword id="KW-0630">Potassium</keyword>
<keyword id="KW-0633">Potassium transport</keyword>
<keyword id="KW-1185">Reference proteome</keyword>
<keyword id="KW-0769">Symport</keyword>
<keyword id="KW-0812">Transmembrane</keyword>
<keyword id="KW-1133">Transmembrane helix</keyword>
<keyword id="KW-0813">Transport</keyword>
<name>KUP_PARXL</name>
<dbReference type="EMBL" id="CP000270">
    <property type="protein sequence ID" value="ABE31347.1"/>
    <property type="molecule type" value="Genomic_DNA"/>
</dbReference>
<dbReference type="RefSeq" id="WP_011488933.1">
    <property type="nucleotide sequence ID" value="NC_007951.1"/>
</dbReference>
<dbReference type="STRING" id="266265.Bxe_A1608"/>
<dbReference type="KEGG" id="bxb:DR64_3767"/>
<dbReference type="KEGG" id="bxe:Bxe_A1608"/>
<dbReference type="PATRIC" id="fig|266265.5.peg.2950"/>
<dbReference type="eggNOG" id="COG3158">
    <property type="taxonomic scope" value="Bacteria"/>
</dbReference>
<dbReference type="OrthoDB" id="9805577at2"/>
<dbReference type="Proteomes" id="UP000001817">
    <property type="component" value="Chromosome 1"/>
</dbReference>
<dbReference type="GO" id="GO:0005886">
    <property type="term" value="C:plasma membrane"/>
    <property type="evidence" value="ECO:0007669"/>
    <property type="project" value="UniProtKB-SubCell"/>
</dbReference>
<dbReference type="GO" id="GO:0015079">
    <property type="term" value="F:potassium ion transmembrane transporter activity"/>
    <property type="evidence" value="ECO:0007669"/>
    <property type="project" value="UniProtKB-UniRule"/>
</dbReference>
<dbReference type="GO" id="GO:0015293">
    <property type="term" value="F:symporter activity"/>
    <property type="evidence" value="ECO:0007669"/>
    <property type="project" value="UniProtKB-UniRule"/>
</dbReference>
<dbReference type="HAMAP" id="MF_01522">
    <property type="entry name" value="Kup"/>
    <property type="match status" value="1"/>
</dbReference>
<dbReference type="InterPro" id="IPR003855">
    <property type="entry name" value="K+_transporter"/>
</dbReference>
<dbReference type="InterPro" id="IPR053952">
    <property type="entry name" value="K_trans_C"/>
</dbReference>
<dbReference type="InterPro" id="IPR053951">
    <property type="entry name" value="K_trans_N"/>
</dbReference>
<dbReference type="InterPro" id="IPR023051">
    <property type="entry name" value="Kup"/>
</dbReference>
<dbReference type="PANTHER" id="PTHR30540:SF79">
    <property type="entry name" value="LOW AFFINITY POTASSIUM TRANSPORT SYSTEM PROTEIN KUP"/>
    <property type="match status" value="1"/>
</dbReference>
<dbReference type="PANTHER" id="PTHR30540">
    <property type="entry name" value="OSMOTIC STRESS POTASSIUM TRANSPORTER"/>
    <property type="match status" value="1"/>
</dbReference>
<dbReference type="Pfam" id="PF02705">
    <property type="entry name" value="K_trans"/>
    <property type="match status" value="1"/>
</dbReference>
<dbReference type="Pfam" id="PF22776">
    <property type="entry name" value="K_trans_C"/>
    <property type="match status" value="1"/>
</dbReference>